<keyword id="KW-1203">Blood coagulation cascade inhibiting toxin</keyword>
<keyword id="KW-0903">Direct protein sequencing</keyword>
<keyword id="KW-1015">Disulfide bond</keyword>
<keyword id="KW-1199">Hemostasis impairing toxin</keyword>
<keyword id="KW-1201">Platelet aggregation inhibiting toxin</keyword>
<keyword id="KW-0964">Secreted</keyword>
<keyword id="KW-0732">Signal</keyword>
<keyword id="KW-0800">Toxin</keyword>
<dbReference type="EMBL" id="AY962524">
    <property type="protein sequence ID" value="AAX68503.1"/>
    <property type="molecule type" value="mRNA"/>
</dbReference>
<dbReference type="PIR" id="A48630">
    <property type="entry name" value="A48630"/>
</dbReference>
<dbReference type="SMR" id="Q56EB1"/>
<dbReference type="MEROPS" id="I63.002"/>
<dbReference type="GO" id="GO:0005576">
    <property type="term" value="C:extracellular region"/>
    <property type="evidence" value="ECO:0007669"/>
    <property type="project" value="UniProtKB-SubCell"/>
</dbReference>
<dbReference type="GO" id="GO:0090729">
    <property type="term" value="F:toxin activity"/>
    <property type="evidence" value="ECO:0007669"/>
    <property type="project" value="UniProtKB-KW"/>
</dbReference>
<dbReference type="FunFam" id="3.10.100.10:FF:000087">
    <property type="entry name" value="Snaclec rhodocetin subunit delta"/>
    <property type="match status" value="1"/>
</dbReference>
<dbReference type="Gene3D" id="3.10.100.10">
    <property type="entry name" value="Mannose-Binding Protein A, subunit A"/>
    <property type="match status" value="1"/>
</dbReference>
<dbReference type="InterPro" id="IPR001304">
    <property type="entry name" value="C-type_lectin-like"/>
</dbReference>
<dbReference type="InterPro" id="IPR016186">
    <property type="entry name" value="C-type_lectin-like/link_sf"/>
</dbReference>
<dbReference type="InterPro" id="IPR050111">
    <property type="entry name" value="C-type_lectin/snaclec_domain"/>
</dbReference>
<dbReference type="InterPro" id="IPR018378">
    <property type="entry name" value="C-type_lectin_CS"/>
</dbReference>
<dbReference type="InterPro" id="IPR016187">
    <property type="entry name" value="CTDL_fold"/>
</dbReference>
<dbReference type="PANTHER" id="PTHR22803">
    <property type="entry name" value="MANNOSE, PHOSPHOLIPASE, LECTIN RECEPTOR RELATED"/>
    <property type="match status" value="1"/>
</dbReference>
<dbReference type="Pfam" id="PF00059">
    <property type="entry name" value="Lectin_C"/>
    <property type="match status" value="1"/>
</dbReference>
<dbReference type="PRINTS" id="PR01504">
    <property type="entry name" value="PNCREATITSAP"/>
</dbReference>
<dbReference type="SMART" id="SM00034">
    <property type="entry name" value="CLECT"/>
    <property type="match status" value="1"/>
</dbReference>
<dbReference type="SUPFAM" id="SSF56436">
    <property type="entry name" value="C-type lectin-like"/>
    <property type="match status" value="1"/>
</dbReference>
<dbReference type="PROSITE" id="PS00615">
    <property type="entry name" value="C_TYPE_LECTIN_1"/>
    <property type="match status" value="1"/>
</dbReference>
<dbReference type="PROSITE" id="PS50041">
    <property type="entry name" value="C_TYPE_LECTIN_2"/>
    <property type="match status" value="1"/>
</dbReference>
<organism>
    <name type="scientific">Bothrops jararaca</name>
    <name type="common">Jararaca</name>
    <name type="synonym">Bothrops jajaraca</name>
    <dbReference type="NCBI Taxonomy" id="8724"/>
    <lineage>
        <taxon>Eukaryota</taxon>
        <taxon>Metazoa</taxon>
        <taxon>Chordata</taxon>
        <taxon>Craniata</taxon>
        <taxon>Vertebrata</taxon>
        <taxon>Euteleostomi</taxon>
        <taxon>Lepidosauria</taxon>
        <taxon>Squamata</taxon>
        <taxon>Bifurcata</taxon>
        <taxon>Unidentata</taxon>
        <taxon>Episquamata</taxon>
        <taxon>Toxicofera</taxon>
        <taxon>Serpentes</taxon>
        <taxon>Colubroidea</taxon>
        <taxon>Viperidae</taxon>
        <taxon>Crotalinae</taxon>
        <taxon>Bothrops</taxon>
    </lineage>
</organism>
<accession>Q56EB1</accession>
<accession>Q9PRZ4</accession>
<protein>
    <recommendedName>
        <fullName>Snaclec bothrojaracin subunit alpha</fullName>
        <shortName>BJC subunit alpha</shortName>
    </recommendedName>
</protein>
<name>SLAA_BOTJA</name>
<feature type="signal peptide" evidence="7 8 10 12">
    <location>
        <begin position="1"/>
        <end position="23"/>
    </location>
</feature>
<feature type="chain" id="PRO_5000095800" description="Snaclec bothrojaracin subunit alpha">
    <location>
        <begin position="24"/>
        <end position="155"/>
    </location>
</feature>
<feature type="domain" description="C-type lectin" evidence="1">
    <location>
        <begin position="32"/>
        <end position="151"/>
    </location>
</feature>
<feature type="disulfide bond" evidence="1">
    <location>
        <begin position="25"/>
        <end position="36"/>
    </location>
</feature>
<feature type="disulfide bond" evidence="1">
    <location>
        <begin position="53"/>
        <end position="150"/>
    </location>
</feature>
<feature type="disulfide bond" description="Interchain (with C-98 in subunit beta)" evidence="1">
    <location>
        <position position="102"/>
    </location>
</feature>
<feature type="disulfide bond" evidence="1">
    <location>
        <begin position="125"/>
        <end position="142"/>
    </location>
</feature>
<feature type="sequence variant" evidence="12">
    <original>S</original>
    <variation>P</variation>
    <location>
        <position position="31"/>
    </location>
</feature>
<feature type="sequence variant" evidence="12">
    <original>G</original>
    <variation>Q</variation>
    <location>
        <position position="34"/>
    </location>
</feature>
<feature type="sequence variant" evidence="12">
    <original>H</original>
    <variation>Q</variation>
    <location>
        <position position="35"/>
    </location>
</feature>
<feature type="sequence variant" evidence="12">
    <original>F</original>
    <variation>V</variation>
    <location>
        <position position="40"/>
    </location>
</feature>
<feature type="sequence variant" evidence="12">
    <original>K</original>
    <variation>E</variation>
    <location>
        <position position="43"/>
    </location>
</feature>
<feature type="sequence variant" evidence="12">
    <original>K</original>
    <variation>Q</variation>
    <location>
        <position position="43"/>
    </location>
</feature>
<feature type="sequence variant" evidence="12">
    <original>W</original>
    <variation>H</variation>
    <location>
        <position position="46"/>
    </location>
</feature>
<feature type="sequence variant" evidence="12">
    <original>W</original>
    <variation>N</variation>
    <location>
        <position position="46"/>
    </location>
</feature>
<feature type="sequence variant" evidence="12">
    <original>R</original>
    <variation>Y</variation>
    <location>
        <position position="51"/>
    </location>
</feature>
<feature type="sequence conflict" description="In Ref. 2; AA sequence." evidence="13" ref="2">
    <original>HE</original>
    <variation>YG</variation>
    <location>
        <begin position="32"/>
        <end position="33"/>
    </location>
</feature>
<feature type="sequence conflict" description="In Ref. 2; AA sequence." evidence="13" ref="2">
    <original>H</original>
    <variation>G</variation>
    <location>
        <position position="35"/>
    </location>
</feature>
<evidence type="ECO:0000255" key="1">
    <source>
        <dbReference type="PROSITE-ProRule" id="PRU00040"/>
    </source>
</evidence>
<evidence type="ECO:0000269" key="2">
    <source>
    </source>
</evidence>
<evidence type="ECO:0000269" key="3">
    <source>
    </source>
</evidence>
<evidence type="ECO:0000269" key="4">
    <source>
    </source>
</evidence>
<evidence type="ECO:0000269" key="5">
    <source>
    </source>
</evidence>
<evidence type="ECO:0000269" key="6">
    <source>
    </source>
</evidence>
<evidence type="ECO:0000269" key="7">
    <source>
    </source>
</evidence>
<evidence type="ECO:0000269" key="8">
    <source>
    </source>
</evidence>
<evidence type="ECO:0000269" key="9">
    <source>
    </source>
</evidence>
<evidence type="ECO:0000269" key="10">
    <source>
    </source>
</evidence>
<evidence type="ECO:0000269" key="11">
    <source>
    </source>
</evidence>
<evidence type="ECO:0000269" key="12">
    <source ref="3"/>
</evidence>
<evidence type="ECO:0000305" key="13"/>
<comment type="function">
    <text evidence="2 3 4 5 6 8 9 10 11">This potent antithrombotic agent acts in a calcium-independent manner. Exerts its anticoagulant effect by two distinct mechanisms. It binds to activated thrombin through exosite 1, blocking fibrinogen clotting, platelet activation, factor V activation and other effects, and it interacts with prothrombin (F2), decreasing its proteolytic activation -especially in the presence of factor Va. In vivo, intravenous injection before thrombosis induction causes a significant decrease in thrombus weight. Furthermore, BJC shows a prolonged effect by remaining in the plasma bound to prothrombin for at least 12 hours.</text>
</comment>
<comment type="subunit">
    <text>Heterodimer of subunits alpha and beta; disulfide-linked.</text>
</comment>
<comment type="subcellular location">
    <subcellularLocation>
        <location>Secreted</location>
    </subcellularLocation>
</comment>
<comment type="tissue specificity">
    <text>Expressed by the venom gland.</text>
</comment>
<comment type="similarity">
    <text evidence="13">Belongs to the snaclec family.</text>
</comment>
<proteinExistence type="evidence at protein level"/>
<reference key="1">
    <citation type="journal article" date="1997" name="Eur. J. Biochem.">
        <title>Molecular cloning and expression of bothrojaracin, a potent thrombin inhibitor from snake venom.</title>
        <authorList>
            <person name="Arocas V."/>
            <person name="Castro H.C."/>
            <person name="Zingali R.B."/>
            <person name="Guillin M.-C."/>
            <person name="Jandrot-Perrus M."/>
            <person name="Bon C."/>
            <person name="Wisner A."/>
        </authorList>
    </citation>
    <scope>NUCLEOTIDE SEQUENCE [MRNA]</scope>
    <scope>PROTEIN SEQUENCE OF 24-31; 44-50; 61-67; 82-94; 106-120 AND 131-149</scope>
    <scope>FUNCTION</scope>
    <source>
        <tissue>Venom</tissue>
        <tissue>Venom gland</tissue>
    </source>
</reference>
<reference key="2">
    <citation type="journal article" date="1993" name="Biochemistry">
        <title>Bothrojaracin, a new thrombin inhibitor isolated from Bothrops jararaca venom: characterization and mechanism of thrombin inhibition.</title>
        <authorList>
            <person name="Zingali R.B."/>
            <person name="Jandrot-Perrus M."/>
            <person name="Guillin M.-C."/>
            <person name="Bon C."/>
        </authorList>
    </citation>
    <scope>PROTEIN SEQUENCE OF 24-39</scope>
    <scope>FUNCTION</scope>
    <source>
        <tissue>Venom</tissue>
    </source>
</reference>
<reference key="3">
    <citation type="journal article" date="1997" name="Toxicon">
        <title>Distinct bothrojaracin isoforms produced by individual jararaca (Bothrops jararaca) snakes.</title>
        <authorList>
            <person name="Monteiro R.Q."/>
            <person name="Carlini C.R."/>
            <person name="Guimaraes J.A."/>
            <person name="Bon C."/>
            <person name="Zingali R.B."/>
        </authorList>
    </citation>
    <scope>PROTEIN SEQUENCE OF 24-51</scope>
    <scope>VARIANTS PRO-31; GLN-34; GLN-35; VAL-40; GLU-43; GLN-43; HIS-46; ASN-46 AND TYR-51</scope>
    <source>
        <tissue>Venom</tissue>
    </source>
</reference>
<reference key="4">
    <citation type="journal article" date="2008" name="Toxicon">
        <title>Identification and characterization of a new member of snake venom thrombin inhibitors from Bothrops insularis using a proteomic approach.</title>
        <authorList>
            <person name="Oliveira-Carvalho A.L."/>
            <person name="Guimaraes P.R."/>
            <person name="Abreu P.A."/>
            <person name="Dutra D.L.S."/>
            <person name="Junqueira-de-Azevedo I.L.M."/>
            <person name="Rodrigues C.R."/>
            <person name="Ho P.L."/>
            <person name="Castro H.C."/>
            <person name="Zingali R.B."/>
        </authorList>
    </citation>
    <scope>PROTEIN SEQUENCE OF 24-38; 44-51 AND 82-94</scope>
    <scope>IDENTIFICATION BY MASS SPECTROMETRY</scope>
</reference>
<reference key="5">
    <citation type="journal article" date="1996" name="Biochemistry">
        <title>Bothrojaracin: a potent two-site-directed thrombin inhibitor.</title>
        <authorList>
            <person name="Arocas V."/>
            <person name="Zingali R.B."/>
            <person name="Guillin M.-C."/>
            <person name="Bon C."/>
            <person name="Jandrot-Perrus M."/>
        </authorList>
    </citation>
    <scope>FUNCTION</scope>
</reference>
<reference key="6">
    <citation type="journal article" date="1998" name="Thromb. Haemost.">
        <title>Inhibition of thrombin-catalyzed factor V activation by bothrojaracin.</title>
        <authorList>
            <person name="Arocas V."/>
            <person name="Lemaire C."/>
            <person name="Bouton M.C."/>
            <person name="Bezeaud A."/>
            <person name="Bon C."/>
            <person name="Guillin M.-C."/>
            <person name="Jandrot-Perrus M."/>
        </authorList>
    </citation>
    <scope>FUNCTION</scope>
</reference>
<reference key="7">
    <citation type="journal article" date="2000" name="Arch. Biochem. Biophys.">
        <title>Inhibition of prothrombin activation by bothrojaracin, a C-type lectin from Bothrops jararaca venom.</title>
        <authorList>
            <person name="Monteiro R.Q."/>
            <person name="Zingali R.B."/>
        </authorList>
    </citation>
    <scope>FUNCTION</scope>
</reference>
<reference key="8">
    <citation type="journal article" date="2001" name="Haemostasis">
        <title>Interaction of bothrojaracin with prothrombin.</title>
        <authorList>
            <person name="Zingali R.B."/>
            <person name="Bianconi M.L."/>
            <person name="Monteiro R.Q."/>
        </authorList>
    </citation>
    <scope>FUNCTION</scope>
</reference>
<reference key="9">
    <citation type="journal article" date="2001" name="Protein Sci.">
        <title>Characterization of bothrojaracin interaction with human prothrombin.</title>
        <authorList>
            <person name="Monteiro R.Q."/>
            <person name="Bock P.E."/>
            <person name="Bianconi M.L."/>
            <person name="Zingali R.B."/>
        </authorList>
    </citation>
    <scope>FUNCTION</scope>
</reference>
<reference key="10">
    <citation type="journal article" date="2002" name="Thromb. Haemost.">
        <title>Bothrojaracin, a proexosite I ligand, inhibits factor Va-accelerated prothrombin activation.</title>
        <authorList>
            <person name="Monteiro R.Q."/>
            <person name="Zingali R.B."/>
        </authorList>
    </citation>
    <scope>FUNCTION</scope>
</reference>
<reference key="11">
    <citation type="journal article" date="2005" name="Pathophysiol. Haemost. Thromb.">
        <title>Bothrojaracin, a Bothrops jararaca snake venom-derived (pro)thrombin inhibitor, as an anti-thrombotic molecule.</title>
        <authorList>
            <person name="Zingali R.B."/>
            <person name="Ferreira M.S."/>
            <person name="Assafim M."/>
            <person name="Frattani F.S."/>
            <person name="Monteiro R.Q."/>
        </authorList>
    </citation>
    <scope>FUNCTION</scope>
    <scope>ION-DEPENDENCE</scope>
    <scope>BIOASSAY</scope>
</reference>
<sequence length="155" mass="17577">MGRFLFVSFGLLVVFLSLSGTAADCPSDWSSHEGHCYKFFQQKMNWADAERFCSEQAKGGHLVSFQSDGETDFVVNLVTEKIQSTDLYAWIGLRVQNKEKQCSSKWSDGSSVSYENVVGRTVKKCFALEKEQEFFVWINIYCGQQNPFVCKSPPP</sequence>